<protein>
    <recommendedName>
        <fullName evidence="1">Tryptophan synthase beta chain</fullName>
        <ecNumber evidence="1">4.2.1.20</ecNumber>
    </recommendedName>
</protein>
<comment type="function">
    <text evidence="1">The beta subunit is responsible for the synthesis of L-tryptophan from indole and L-serine.</text>
</comment>
<comment type="catalytic activity">
    <reaction evidence="1">
        <text>(1S,2R)-1-C-(indol-3-yl)glycerol 3-phosphate + L-serine = D-glyceraldehyde 3-phosphate + L-tryptophan + H2O</text>
        <dbReference type="Rhea" id="RHEA:10532"/>
        <dbReference type="ChEBI" id="CHEBI:15377"/>
        <dbReference type="ChEBI" id="CHEBI:33384"/>
        <dbReference type="ChEBI" id="CHEBI:57912"/>
        <dbReference type="ChEBI" id="CHEBI:58866"/>
        <dbReference type="ChEBI" id="CHEBI:59776"/>
        <dbReference type="EC" id="4.2.1.20"/>
    </reaction>
</comment>
<comment type="cofactor">
    <cofactor evidence="1">
        <name>pyridoxal 5'-phosphate</name>
        <dbReference type="ChEBI" id="CHEBI:597326"/>
    </cofactor>
</comment>
<comment type="pathway">
    <text evidence="1">Amino-acid biosynthesis; L-tryptophan biosynthesis; L-tryptophan from chorismate: step 5/5.</text>
</comment>
<comment type="subunit">
    <text evidence="1">Tetramer of two alpha and two beta chains.</text>
</comment>
<comment type="similarity">
    <text evidence="1">Belongs to the TrpB family.</text>
</comment>
<sequence>MTLLNPYFGEFGGQFVPQILIPALRQLEEAFVSAQKDPEFQAEFTDLLKNYAGRPTALTLCKNLTAGTKTKLYLKREDLLHGGAHKTNQVLGQALLAKRMGKSEIIAETGAGQHGVATALACALLGLKCRVYMGAKDVERQSPNVFRMRLMGAEVIPVHSGSSTLKDACNEALRDWSGSYETAHYLLGTAAGPHPYPTIVREFQRMIGEETKAQILEKEGRLPDAVLACVGGGSNAIGMFADFIDDTHVRLIGIEPGGLGIESGQHGAPLKHGRVGIYFGMKSPMMQTSDGQIEESYSISAGLDFPSVGPQHAYLNSIGRADYVSITDDEALDAFKALCRGEGIIPALESSHALAHALKMIKAEPEKEQLLVVNLSGRGDKDIFTVHDILKDRGEI</sequence>
<proteinExistence type="inferred from homology"/>
<feature type="chain" id="PRO_1000018339" description="Tryptophan synthase beta chain">
    <location>
        <begin position="1"/>
        <end position="396"/>
    </location>
</feature>
<feature type="modified residue" description="N6-(pyridoxal phosphate)lysine" evidence="1">
    <location>
        <position position="86"/>
    </location>
</feature>
<keyword id="KW-0028">Amino-acid biosynthesis</keyword>
<keyword id="KW-0057">Aromatic amino acid biosynthesis</keyword>
<keyword id="KW-0456">Lyase</keyword>
<keyword id="KW-0663">Pyridoxal phosphate</keyword>
<keyword id="KW-1185">Reference proteome</keyword>
<keyword id="KW-0822">Tryptophan biosynthesis</keyword>
<dbReference type="EC" id="4.2.1.20" evidence="1"/>
<dbReference type="EMBL" id="BX950851">
    <property type="protein sequence ID" value="CAG75203.1"/>
    <property type="molecule type" value="Genomic_DNA"/>
</dbReference>
<dbReference type="SMR" id="Q6D4U0"/>
<dbReference type="STRING" id="218491.ECA2300"/>
<dbReference type="KEGG" id="eca:ECA2300"/>
<dbReference type="eggNOG" id="COG0133">
    <property type="taxonomic scope" value="Bacteria"/>
</dbReference>
<dbReference type="HOGENOM" id="CLU_016734_3_1_6"/>
<dbReference type="OrthoDB" id="9766131at2"/>
<dbReference type="UniPathway" id="UPA00035">
    <property type="reaction ID" value="UER00044"/>
</dbReference>
<dbReference type="Proteomes" id="UP000007966">
    <property type="component" value="Chromosome"/>
</dbReference>
<dbReference type="GO" id="GO:0005737">
    <property type="term" value="C:cytoplasm"/>
    <property type="evidence" value="ECO:0007669"/>
    <property type="project" value="TreeGrafter"/>
</dbReference>
<dbReference type="GO" id="GO:0004834">
    <property type="term" value="F:tryptophan synthase activity"/>
    <property type="evidence" value="ECO:0007669"/>
    <property type="project" value="UniProtKB-UniRule"/>
</dbReference>
<dbReference type="CDD" id="cd06446">
    <property type="entry name" value="Trp-synth_B"/>
    <property type="match status" value="1"/>
</dbReference>
<dbReference type="FunFam" id="3.40.50.1100:FF:000001">
    <property type="entry name" value="Tryptophan synthase beta chain"/>
    <property type="match status" value="1"/>
</dbReference>
<dbReference type="FunFam" id="3.40.50.1100:FF:000004">
    <property type="entry name" value="Tryptophan synthase beta chain"/>
    <property type="match status" value="1"/>
</dbReference>
<dbReference type="Gene3D" id="3.40.50.1100">
    <property type="match status" value="2"/>
</dbReference>
<dbReference type="HAMAP" id="MF_00133">
    <property type="entry name" value="Trp_synth_beta"/>
    <property type="match status" value="1"/>
</dbReference>
<dbReference type="InterPro" id="IPR006653">
    <property type="entry name" value="Trp_synth_b_CS"/>
</dbReference>
<dbReference type="InterPro" id="IPR006654">
    <property type="entry name" value="Trp_synth_beta"/>
</dbReference>
<dbReference type="InterPro" id="IPR023026">
    <property type="entry name" value="Trp_synth_beta/beta-like"/>
</dbReference>
<dbReference type="InterPro" id="IPR001926">
    <property type="entry name" value="TrpB-like_PALP"/>
</dbReference>
<dbReference type="InterPro" id="IPR036052">
    <property type="entry name" value="TrpB-like_PALP_sf"/>
</dbReference>
<dbReference type="NCBIfam" id="TIGR00263">
    <property type="entry name" value="trpB"/>
    <property type="match status" value="1"/>
</dbReference>
<dbReference type="PANTHER" id="PTHR48077:SF3">
    <property type="entry name" value="TRYPTOPHAN SYNTHASE"/>
    <property type="match status" value="1"/>
</dbReference>
<dbReference type="PANTHER" id="PTHR48077">
    <property type="entry name" value="TRYPTOPHAN SYNTHASE-RELATED"/>
    <property type="match status" value="1"/>
</dbReference>
<dbReference type="Pfam" id="PF00291">
    <property type="entry name" value="PALP"/>
    <property type="match status" value="1"/>
</dbReference>
<dbReference type="PIRSF" id="PIRSF001413">
    <property type="entry name" value="Trp_syn_beta"/>
    <property type="match status" value="1"/>
</dbReference>
<dbReference type="SUPFAM" id="SSF53686">
    <property type="entry name" value="Tryptophan synthase beta subunit-like PLP-dependent enzymes"/>
    <property type="match status" value="1"/>
</dbReference>
<dbReference type="PROSITE" id="PS00168">
    <property type="entry name" value="TRP_SYNTHASE_BETA"/>
    <property type="match status" value="1"/>
</dbReference>
<accession>Q6D4U0</accession>
<evidence type="ECO:0000255" key="1">
    <source>
        <dbReference type="HAMAP-Rule" id="MF_00133"/>
    </source>
</evidence>
<name>TRPB_PECAS</name>
<reference key="1">
    <citation type="journal article" date="2004" name="Proc. Natl. Acad. Sci. U.S.A.">
        <title>Genome sequence of the enterobacterial phytopathogen Erwinia carotovora subsp. atroseptica and characterization of virulence factors.</title>
        <authorList>
            <person name="Bell K.S."/>
            <person name="Sebaihia M."/>
            <person name="Pritchard L."/>
            <person name="Holden M.T.G."/>
            <person name="Hyman L.J."/>
            <person name="Holeva M.C."/>
            <person name="Thomson N.R."/>
            <person name="Bentley S.D."/>
            <person name="Churcher L.J.C."/>
            <person name="Mungall K."/>
            <person name="Atkin R."/>
            <person name="Bason N."/>
            <person name="Brooks K."/>
            <person name="Chillingworth T."/>
            <person name="Clark K."/>
            <person name="Doggett J."/>
            <person name="Fraser A."/>
            <person name="Hance Z."/>
            <person name="Hauser H."/>
            <person name="Jagels K."/>
            <person name="Moule S."/>
            <person name="Norbertczak H."/>
            <person name="Ormond D."/>
            <person name="Price C."/>
            <person name="Quail M.A."/>
            <person name="Sanders M."/>
            <person name="Walker D."/>
            <person name="Whitehead S."/>
            <person name="Salmond G.P.C."/>
            <person name="Birch P.R.J."/>
            <person name="Parkhill J."/>
            <person name="Toth I.K."/>
        </authorList>
    </citation>
    <scope>NUCLEOTIDE SEQUENCE [LARGE SCALE GENOMIC DNA]</scope>
    <source>
        <strain>SCRI 1043 / ATCC BAA-672</strain>
    </source>
</reference>
<organism>
    <name type="scientific">Pectobacterium atrosepticum (strain SCRI 1043 / ATCC BAA-672)</name>
    <name type="common">Erwinia carotovora subsp. atroseptica</name>
    <dbReference type="NCBI Taxonomy" id="218491"/>
    <lineage>
        <taxon>Bacteria</taxon>
        <taxon>Pseudomonadati</taxon>
        <taxon>Pseudomonadota</taxon>
        <taxon>Gammaproteobacteria</taxon>
        <taxon>Enterobacterales</taxon>
        <taxon>Pectobacteriaceae</taxon>
        <taxon>Pectobacterium</taxon>
    </lineage>
</organism>
<gene>
    <name evidence="1" type="primary">trpB</name>
    <name type="ordered locus">ECA2300</name>
</gene>